<reference evidence="3" key="1">
    <citation type="journal article" date="2001" name="Comp. Biochem. Physiol.">
        <title>Purification, N-terminal amino acid sequence, and some properties of Cu,Zn-superoxide dismutase from Japanese flounder (Paralichthys olivaceus) hepato-pancreas.</title>
        <authorList>
            <person name="Osatomi K."/>
            <person name="Masuda Y."/>
            <person name="Hara K."/>
            <person name="Ishihara T."/>
        </authorList>
    </citation>
    <scope>PROTEIN SEQUENCE OF 2-26</scope>
    <scope>CHARACTERIZATION</scope>
    <scope>CATALYTIC ACTIVITY</scope>
    <source>
        <tissue>Hepatopancreas</tissue>
    </source>
</reference>
<protein>
    <recommendedName>
        <fullName>Superoxide dismutase [Cu-Zn]</fullName>
        <ecNumber evidence="4">1.15.1.1</ecNumber>
    </recommendedName>
</protein>
<organism evidence="3">
    <name type="scientific">Paralichthys olivaceus</name>
    <name type="common">Bastard halibut</name>
    <name type="synonym">Hippoglossus olivaceus</name>
    <dbReference type="NCBI Taxonomy" id="8255"/>
    <lineage>
        <taxon>Eukaryota</taxon>
        <taxon>Metazoa</taxon>
        <taxon>Chordata</taxon>
        <taxon>Craniata</taxon>
        <taxon>Vertebrata</taxon>
        <taxon>Euteleostomi</taxon>
        <taxon>Actinopterygii</taxon>
        <taxon>Neopterygii</taxon>
        <taxon>Teleostei</taxon>
        <taxon>Neoteleostei</taxon>
        <taxon>Acanthomorphata</taxon>
        <taxon>Carangaria</taxon>
        <taxon>Pleuronectiformes</taxon>
        <taxon>Pleuronectoidei</taxon>
        <taxon>Paralichthyidae</taxon>
        <taxon>Paralichthys</taxon>
    </lineage>
</organism>
<keyword id="KW-0049">Antioxidant</keyword>
<keyword id="KW-0186">Copper</keyword>
<keyword id="KW-0963">Cytoplasm</keyword>
<keyword id="KW-0903">Direct protein sequencing</keyword>
<keyword id="KW-0449">Lipoprotein</keyword>
<keyword id="KW-0479">Metal-binding</keyword>
<keyword id="KW-0539">Nucleus</keyword>
<keyword id="KW-0560">Oxidoreductase</keyword>
<keyword id="KW-0564">Palmitate</keyword>
<keyword id="KW-0862">Zinc</keyword>
<gene>
    <name type="primary">sod1</name>
</gene>
<accession>P83129</accession>
<comment type="function">
    <text evidence="1">Destroys radicals which are normally produced within the cells and which are toxic to biological systems.</text>
</comment>
<comment type="catalytic activity">
    <reaction evidence="4">
        <text>2 superoxide + 2 H(+) = H2O2 + O2</text>
        <dbReference type="Rhea" id="RHEA:20696"/>
        <dbReference type="ChEBI" id="CHEBI:15378"/>
        <dbReference type="ChEBI" id="CHEBI:15379"/>
        <dbReference type="ChEBI" id="CHEBI:16240"/>
        <dbReference type="ChEBI" id="CHEBI:18421"/>
        <dbReference type="EC" id="1.15.1.1"/>
    </reaction>
    <physiologicalReaction direction="left-to-right" evidence="4">
        <dbReference type="Rhea" id="RHEA:20697"/>
    </physiologicalReaction>
</comment>
<comment type="cofactor">
    <cofactor evidence="1">
        <name>Cu cation</name>
        <dbReference type="ChEBI" id="CHEBI:23378"/>
    </cofactor>
    <text evidence="1">Binds 1 copper ion per subunit.</text>
</comment>
<comment type="cofactor">
    <cofactor evidence="1">
        <name>Zn(2+)</name>
        <dbReference type="ChEBI" id="CHEBI:29105"/>
    </cofactor>
    <text evidence="1">Binds 1 zinc ion per subunit.</text>
</comment>
<comment type="subunit">
    <text evidence="2">Homotrimer.</text>
</comment>
<comment type="subcellular location">
    <subcellularLocation>
        <location evidence="1">Cytoplasm</location>
    </subcellularLocation>
    <subcellularLocation>
        <location evidence="1">Nucleus</location>
    </subcellularLocation>
</comment>
<comment type="similarity">
    <text evidence="3">Belongs to the Cu-Zn superoxide dismutase family.</text>
</comment>
<dbReference type="EC" id="1.15.1.1" evidence="4"/>
<dbReference type="SMR" id="P83129"/>
<dbReference type="GO" id="GO:0005737">
    <property type="term" value="C:cytoplasm"/>
    <property type="evidence" value="ECO:0000304"/>
    <property type="project" value="UniProtKB"/>
</dbReference>
<dbReference type="GO" id="GO:0005634">
    <property type="term" value="C:nucleus"/>
    <property type="evidence" value="ECO:0007669"/>
    <property type="project" value="UniProtKB-SubCell"/>
</dbReference>
<dbReference type="GO" id="GO:0046872">
    <property type="term" value="F:metal ion binding"/>
    <property type="evidence" value="ECO:0007669"/>
    <property type="project" value="UniProtKB-KW"/>
</dbReference>
<dbReference type="GO" id="GO:0004784">
    <property type="term" value="F:superoxide dismutase activity"/>
    <property type="evidence" value="ECO:0000314"/>
    <property type="project" value="UniProtKB"/>
</dbReference>
<dbReference type="GO" id="GO:0019430">
    <property type="term" value="P:removal of superoxide radicals"/>
    <property type="evidence" value="ECO:0000304"/>
    <property type="project" value="UniProtKB"/>
</dbReference>
<name>SODC_PAROL</name>
<feature type="initiator methionine" description="Removed" evidence="2">
    <location>
        <position position="1"/>
    </location>
</feature>
<feature type="chain" id="PRO_0000164073" description="Superoxide dismutase [Cu-Zn]">
    <location>
        <begin position="2"/>
        <end position="26" status="greater than"/>
    </location>
</feature>
<feature type="lipid moiety-binding region" description="S-palmitoyl cysteine" evidence="1">
    <location>
        <position position="7"/>
    </location>
</feature>
<feature type="non-terminal residue">
    <location>
        <position position="26"/>
    </location>
</feature>
<evidence type="ECO:0000250" key="1"/>
<evidence type="ECO:0000269" key="2">
    <source>
    </source>
</evidence>
<evidence type="ECO:0000305" key="3"/>
<evidence type="ECO:0000305" key="4">
    <source>
    </source>
</evidence>
<sequence length="26" mass="2735">MALKAVCVLKGAGETSGTVHFEQEDN</sequence>
<proteinExistence type="evidence at protein level"/>